<organism>
    <name type="scientific">Mycobacterium avium</name>
    <dbReference type="NCBI Taxonomy" id="1764"/>
    <lineage>
        <taxon>Bacteria</taxon>
        <taxon>Bacillati</taxon>
        <taxon>Actinomycetota</taxon>
        <taxon>Actinomycetes</taxon>
        <taxon>Mycobacteriales</taxon>
        <taxon>Mycobacteriaceae</taxon>
        <taxon>Mycobacterium</taxon>
        <taxon>Mycobacterium avium complex (MAC)</taxon>
    </lineage>
</organism>
<reference key="1">
    <citation type="journal article" date="1998" name="Microbiology">
        <title>Determination of a 15437 bp nucleotide sequence around the inhA gene of Mycobacterium avium and similarity analysis of the products of putative ORFs.</title>
        <authorList>
            <person name="Labo M."/>
            <person name="Gusberti L."/>
            <person name="de Rossi E."/>
            <person name="Speziale P."/>
            <person name="Riccardi G."/>
        </authorList>
    </citation>
    <scope>NUCLEOTIDE SEQUENCE [GENOMIC DNA]</scope>
    <source>
        <strain>GIR10</strain>
    </source>
</reference>
<evidence type="ECO:0000250" key="1">
    <source>
        <dbReference type="UniProtKB" id="P9WGR1"/>
    </source>
</evidence>
<evidence type="ECO:0000305" key="2"/>
<evidence type="ECO:0000312" key="3">
    <source>
        <dbReference type="EMBL" id="AAC46204.1"/>
    </source>
</evidence>
<feature type="chain" id="PRO_0000054914" description="Enoyl-[acyl-carrier-protein] reductase [NADH]">
    <location>
        <begin position="1"/>
        <end position="268"/>
    </location>
</feature>
<feature type="binding site" evidence="1">
    <location>
        <begin position="20"/>
        <end position="21"/>
    </location>
    <ligand>
        <name>NAD(+)</name>
        <dbReference type="ChEBI" id="CHEBI:57540"/>
    </ligand>
</feature>
<feature type="binding site" evidence="1">
    <location>
        <begin position="64"/>
        <end position="65"/>
    </location>
    <ligand>
        <name>NAD(+)</name>
        <dbReference type="ChEBI" id="CHEBI:57540"/>
    </ligand>
</feature>
<feature type="binding site" evidence="1">
    <location>
        <begin position="95"/>
        <end position="96"/>
    </location>
    <ligand>
        <name>NAD(+)</name>
        <dbReference type="ChEBI" id="CHEBI:57540"/>
    </ligand>
</feature>
<feature type="binding site" evidence="1">
    <location>
        <position position="157"/>
    </location>
    <ligand>
        <name>substrate</name>
    </ligand>
</feature>
<feature type="binding site" evidence="1">
    <location>
        <position position="164"/>
    </location>
    <ligand>
        <name>NAD(+)</name>
        <dbReference type="ChEBI" id="CHEBI:57540"/>
    </ligand>
</feature>
<feature type="binding site" evidence="1">
    <location>
        <position position="193"/>
    </location>
    <ligand>
        <name>NAD(+)</name>
        <dbReference type="ChEBI" id="CHEBI:57540"/>
    </ligand>
</feature>
<feature type="site" description="May act as an intermediate that passes the hydride ion from NADH to the substrate" evidence="1">
    <location>
        <position position="148"/>
    </location>
</feature>
<feature type="site" description="Transition state stabilizer" evidence="1">
    <location>
        <position position="157"/>
    </location>
</feature>
<comment type="function">
    <text evidence="1">Enoyl-ACP reductase of the type II fatty acid syntase (FAS-II) system, which is involved in the biosynthesis of mycolic acids, a major component of mycobacterial cell walls. Catalyzes the NADH-dependent reduction of the double bond of 2-trans-enoyl-[acyl-carrier protein], an essential step in the fatty acid elongation cycle of the FAS-II pathway. Shows preference for long-chain fatty acyl thioester substrates, and can also use 2-trans-enoyl-CoAs as alternative substrates. The mycobacterial FAS-II system utilizes the products of the FAS-I system as primers to extend fatty acyl chain lengths up to C56, forming the meromycolate chain that serves as the precursor for final mycolic acids.</text>
</comment>
<comment type="catalytic activity">
    <reaction evidence="1">
        <text>a 2,3-saturated acyl-[ACP] + NAD(+) = a (2E)-enoyl-[ACP] + NADH + H(+)</text>
        <dbReference type="Rhea" id="RHEA:10240"/>
        <dbReference type="Rhea" id="RHEA-COMP:9925"/>
        <dbReference type="Rhea" id="RHEA-COMP:9926"/>
        <dbReference type="ChEBI" id="CHEBI:15378"/>
        <dbReference type="ChEBI" id="CHEBI:57540"/>
        <dbReference type="ChEBI" id="CHEBI:57945"/>
        <dbReference type="ChEBI" id="CHEBI:78784"/>
        <dbReference type="ChEBI" id="CHEBI:78785"/>
        <dbReference type="EC" id="1.3.1.9"/>
    </reaction>
    <physiologicalReaction direction="right-to-left" evidence="1">
        <dbReference type="Rhea" id="RHEA:10242"/>
    </physiologicalReaction>
</comment>
<comment type="catalytic activity">
    <reaction evidence="1">
        <text>a 2,3-saturated acyl-CoA + NAD(+) = a (2E)-enoyl-CoA + NADH + H(+)</text>
        <dbReference type="Rhea" id="RHEA:18177"/>
        <dbReference type="ChEBI" id="CHEBI:15378"/>
        <dbReference type="ChEBI" id="CHEBI:57540"/>
        <dbReference type="ChEBI" id="CHEBI:57945"/>
        <dbReference type="ChEBI" id="CHEBI:58856"/>
        <dbReference type="ChEBI" id="CHEBI:65111"/>
    </reaction>
    <physiologicalReaction direction="right-to-left" evidence="1">
        <dbReference type="Rhea" id="RHEA:18179"/>
    </physiologicalReaction>
</comment>
<comment type="pathway">
    <text evidence="1">Lipid metabolism; mycolic acid biosynthesis.</text>
</comment>
<comment type="subunit">
    <text evidence="1">Homodimer. Homotetramer.</text>
</comment>
<comment type="similarity">
    <text evidence="2">Belongs to the short-chain dehydrogenases/reductases (SDR) family. FabI subfamily.</text>
</comment>
<protein>
    <recommendedName>
        <fullName evidence="1">Enoyl-[acyl-carrier-protein] reductase [NADH]</fullName>
        <shortName evidence="1">ENR</shortName>
        <shortName evidence="1">Enoyl-ACP reductase</shortName>
        <ecNumber evidence="1">1.3.1.9</ecNumber>
    </recommendedName>
    <alternativeName>
        <fullName evidence="1">FAS-II enoyl-ACP reductase</fullName>
    </alternativeName>
    <alternativeName>
        <fullName evidence="1">NADH-dependent 2-trans-enoyl-ACP reductase</fullName>
    </alternativeName>
</protein>
<accession>O07400</accession>
<sequence>MAGLLDGKRILVTGIITDSSIAFHIAKVAQEAGAQLVLTGFDRLRLIQRIVDRLPEKAPLIELDVQNEEHLNTLAQRVTGEIGEGNKLDGVVHSIASSETGMADQPFFDAPYEDVSKGIHISADSDASLAKALLPIMNPGGSIVGMDFDPSRAMPAYNWMTVAKSALESVNRFVAREAGPHGVRSNLVAAGPIRTLAMAGIVGGVLGDQAAEQIRLLEEGWDQRAPIGWNMKDPTPVAKTVCALLSDWLPATTGTIIYADRGASTQLL</sequence>
<proteinExistence type="inferred from homology"/>
<dbReference type="EC" id="1.3.1.9" evidence="1"/>
<dbReference type="EMBL" id="AF002133">
    <property type="protein sequence ID" value="AAC46204.1"/>
    <property type="molecule type" value="Genomic_DNA"/>
</dbReference>
<dbReference type="SMR" id="O07400"/>
<dbReference type="UniPathway" id="UPA00915"/>
<dbReference type="GO" id="GO:0004318">
    <property type="term" value="F:enoyl-[acyl-carrier-protein] reductase (NADH) activity"/>
    <property type="evidence" value="ECO:0007669"/>
    <property type="project" value="UniProtKB-EC"/>
</dbReference>
<dbReference type="GO" id="GO:0050343">
    <property type="term" value="F:trans-2-enoyl-CoA reductase (NADH) activity"/>
    <property type="evidence" value="ECO:0007669"/>
    <property type="project" value="RHEA"/>
</dbReference>
<dbReference type="GO" id="GO:0006633">
    <property type="term" value="P:fatty acid biosynthetic process"/>
    <property type="evidence" value="ECO:0007669"/>
    <property type="project" value="UniProtKB-KW"/>
</dbReference>
<dbReference type="CDD" id="cd05372">
    <property type="entry name" value="ENR_SDR"/>
    <property type="match status" value="1"/>
</dbReference>
<dbReference type="Gene3D" id="3.40.50.720">
    <property type="entry name" value="NAD(P)-binding Rossmann-like Domain"/>
    <property type="match status" value="1"/>
</dbReference>
<dbReference type="InterPro" id="IPR014358">
    <property type="entry name" value="Enoyl-ACP_Rdtase_NADH"/>
</dbReference>
<dbReference type="InterPro" id="IPR053410">
    <property type="entry name" value="Mycobact_enoyl-ACP_red"/>
</dbReference>
<dbReference type="InterPro" id="IPR036291">
    <property type="entry name" value="NAD(P)-bd_dom_sf"/>
</dbReference>
<dbReference type="InterPro" id="IPR002347">
    <property type="entry name" value="SDR_fam"/>
</dbReference>
<dbReference type="NCBIfam" id="NF040631">
    <property type="entry name" value="InhA"/>
    <property type="match status" value="1"/>
</dbReference>
<dbReference type="NCBIfam" id="NF005908">
    <property type="entry name" value="PRK07889.1"/>
    <property type="match status" value="1"/>
</dbReference>
<dbReference type="PANTHER" id="PTHR43159">
    <property type="entry name" value="ENOYL-[ACYL-CARRIER-PROTEIN] REDUCTASE"/>
    <property type="match status" value="1"/>
</dbReference>
<dbReference type="PANTHER" id="PTHR43159:SF2">
    <property type="entry name" value="ENOYL-[ACYL-CARRIER-PROTEIN] REDUCTASE [NADH], CHLOROPLASTIC"/>
    <property type="match status" value="1"/>
</dbReference>
<dbReference type="Pfam" id="PF13561">
    <property type="entry name" value="adh_short_C2"/>
    <property type="match status" value="1"/>
</dbReference>
<dbReference type="PIRSF" id="PIRSF000094">
    <property type="entry name" value="Enoyl-ACP_rdct"/>
    <property type="match status" value="1"/>
</dbReference>
<dbReference type="SUPFAM" id="SSF51735">
    <property type="entry name" value="NAD(P)-binding Rossmann-fold domains"/>
    <property type="match status" value="1"/>
</dbReference>
<name>INHA_MYCAV</name>
<gene>
    <name evidence="3" type="primary">inhA</name>
</gene>
<keyword id="KW-0275">Fatty acid biosynthesis</keyword>
<keyword id="KW-0276">Fatty acid metabolism</keyword>
<keyword id="KW-0444">Lipid biosynthesis</keyword>
<keyword id="KW-0443">Lipid metabolism</keyword>
<keyword id="KW-0520">NAD</keyword>
<keyword id="KW-0560">Oxidoreductase</keyword>